<proteinExistence type="inferred from homology"/>
<feature type="chain" id="PRO_0000377012" description="1,4-dihydroxy-2-naphthoyl-CoA hydrolase">
    <location>
        <begin position="1"/>
        <end position="138"/>
    </location>
</feature>
<feature type="active site" evidence="1">
    <location>
        <position position="14"/>
    </location>
</feature>
<sequence>MNDYTRTIRLSDTDAAGVVYFASLLSICHEAYEASLEASGIDLKSFFRDSEVVIPIVHAEIDFFRPLYSGDRIIITLTTLQLKDTEFEITYQVGLVAPQSSLIAKAKTRHVAINPQTRQRTPLSESLMQWLKSTENSE</sequence>
<keyword id="KW-0378">Hydrolase</keyword>
<keyword id="KW-1185">Reference proteome</keyword>
<gene>
    <name type="ordered locus">PCC8801_1849</name>
</gene>
<comment type="function">
    <text evidence="1">Catalyzes the hydrolysis of 1,4-dihydroxy-2-naphthoyl-CoA (DHNA-CoA) to 1,4-dihydroxy-2-naphthoate (DHNA), a reaction involved in phylloquinone (vitamin K1) biosynthesis.</text>
</comment>
<comment type="catalytic activity">
    <reaction evidence="1">
        <text>1,4-dihydroxy-2-naphthoyl-CoA + H2O = 1,4-dihydroxy-2-naphthoate + CoA + H(+)</text>
        <dbReference type="Rhea" id="RHEA:26309"/>
        <dbReference type="ChEBI" id="CHEBI:11173"/>
        <dbReference type="ChEBI" id="CHEBI:15377"/>
        <dbReference type="ChEBI" id="CHEBI:15378"/>
        <dbReference type="ChEBI" id="CHEBI:57287"/>
        <dbReference type="ChEBI" id="CHEBI:58897"/>
        <dbReference type="EC" id="3.1.2.28"/>
    </reaction>
</comment>
<comment type="pathway">
    <text evidence="1">Cofactor biosynthesis; phylloquinone biosynthesis.</text>
</comment>
<comment type="pathway">
    <text evidence="1">Quinol/quinone metabolism; 1,4-dihydroxy-2-naphthoate biosynthesis; 1,4-dihydroxy-2-naphthoate from chorismate: step 7/7.</text>
</comment>
<comment type="similarity">
    <text evidence="1">Belongs to the 4-hydroxybenzoyl-CoA thioesterase family. DHNA-CoA hydrolase subfamily.</text>
</comment>
<name>DNCH_RIPO1</name>
<organism>
    <name type="scientific">Rippkaea orientalis (strain PCC 8801 / RF-1)</name>
    <name type="common">Cyanothece sp. (strain PCC 8801)</name>
    <dbReference type="NCBI Taxonomy" id="41431"/>
    <lineage>
        <taxon>Bacteria</taxon>
        <taxon>Bacillati</taxon>
        <taxon>Cyanobacteriota</taxon>
        <taxon>Cyanophyceae</taxon>
        <taxon>Oscillatoriophycideae</taxon>
        <taxon>Chroococcales</taxon>
        <taxon>Aphanothecaceae</taxon>
        <taxon>Rippkaea</taxon>
        <taxon>Rippkaea orientalis</taxon>
    </lineage>
</organism>
<evidence type="ECO:0000255" key="1">
    <source>
        <dbReference type="HAMAP-Rule" id="MF_02101"/>
    </source>
</evidence>
<accession>B7JXS8</accession>
<protein>
    <recommendedName>
        <fullName evidence="1">1,4-dihydroxy-2-naphthoyl-CoA hydrolase</fullName>
        <shortName evidence="1">DHNA-CoA hydrolase</shortName>
        <ecNumber evidence="1">3.1.2.28</ecNumber>
    </recommendedName>
    <alternativeName>
        <fullName evidence="1">DHNA-CoA thioesterase</fullName>
    </alternativeName>
</protein>
<reference key="1">
    <citation type="journal article" date="2011" name="MBio">
        <title>Novel metabolic attributes of the genus Cyanothece, comprising a group of unicellular nitrogen-fixing Cyanobacteria.</title>
        <authorList>
            <person name="Bandyopadhyay A."/>
            <person name="Elvitigala T."/>
            <person name="Welsh E."/>
            <person name="Stockel J."/>
            <person name="Liberton M."/>
            <person name="Min H."/>
            <person name="Sherman L.A."/>
            <person name="Pakrasi H.B."/>
        </authorList>
    </citation>
    <scope>NUCLEOTIDE SEQUENCE [LARGE SCALE GENOMIC DNA]</scope>
    <source>
        <strain>PCC 8801 / RF-1</strain>
    </source>
</reference>
<dbReference type="EC" id="3.1.2.28" evidence="1"/>
<dbReference type="EMBL" id="CP001287">
    <property type="protein sequence ID" value="ACK65892.1"/>
    <property type="molecule type" value="Genomic_DNA"/>
</dbReference>
<dbReference type="RefSeq" id="WP_012595164.1">
    <property type="nucleotide sequence ID" value="NC_011726.1"/>
</dbReference>
<dbReference type="SMR" id="B7JXS8"/>
<dbReference type="STRING" id="41431.PCC8801_1849"/>
<dbReference type="KEGG" id="cyp:PCC8801_1849"/>
<dbReference type="eggNOG" id="COG0824">
    <property type="taxonomic scope" value="Bacteria"/>
</dbReference>
<dbReference type="HOGENOM" id="CLU_101141_5_3_3"/>
<dbReference type="OrthoDB" id="9800856at2"/>
<dbReference type="UniPathway" id="UPA00995"/>
<dbReference type="UniPathway" id="UPA01057">
    <property type="reaction ID" value="UER01033"/>
</dbReference>
<dbReference type="Proteomes" id="UP000008204">
    <property type="component" value="Chromosome"/>
</dbReference>
<dbReference type="GO" id="GO:0061522">
    <property type="term" value="F:1,4-dihydroxy-2-naphthoyl-CoA thioesterase activity"/>
    <property type="evidence" value="ECO:0007669"/>
    <property type="project" value="UniProtKB-EC"/>
</dbReference>
<dbReference type="GO" id="GO:0047617">
    <property type="term" value="F:fatty acyl-CoA hydrolase activity"/>
    <property type="evidence" value="ECO:0007669"/>
    <property type="project" value="TreeGrafter"/>
</dbReference>
<dbReference type="GO" id="GO:0042372">
    <property type="term" value="P:phylloquinone biosynthetic process"/>
    <property type="evidence" value="ECO:0007669"/>
    <property type="project" value="UniProtKB-UniRule"/>
</dbReference>
<dbReference type="CDD" id="cd00586">
    <property type="entry name" value="4HBT"/>
    <property type="match status" value="1"/>
</dbReference>
<dbReference type="Gene3D" id="3.10.129.10">
    <property type="entry name" value="Hotdog Thioesterase"/>
    <property type="match status" value="1"/>
</dbReference>
<dbReference type="HAMAP" id="MF_02101">
    <property type="entry name" value="DHNA_CoA_hydrolase"/>
    <property type="match status" value="1"/>
</dbReference>
<dbReference type="InterPro" id="IPR050563">
    <property type="entry name" value="4-hydroxybenzoyl-CoA_TE"/>
</dbReference>
<dbReference type="InterPro" id="IPR022829">
    <property type="entry name" value="DHNA_CoA_hydrolase"/>
</dbReference>
<dbReference type="InterPro" id="IPR029069">
    <property type="entry name" value="HotDog_dom_sf"/>
</dbReference>
<dbReference type="PANTHER" id="PTHR31793">
    <property type="entry name" value="4-HYDROXYBENZOYL-COA THIOESTERASE FAMILY MEMBER"/>
    <property type="match status" value="1"/>
</dbReference>
<dbReference type="PANTHER" id="PTHR31793:SF37">
    <property type="entry name" value="ACYL-COA THIOESTER HYDROLASE YBGC"/>
    <property type="match status" value="1"/>
</dbReference>
<dbReference type="Pfam" id="PF13279">
    <property type="entry name" value="4HBT_2"/>
    <property type="match status" value="1"/>
</dbReference>
<dbReference type="SUPFAM" id="SSF54637">
    <property type="entry name" value="Thioesterase/thiol ester dehydrase-isomerase"/>
    <property type="match status" value="1"/>
</dbReference>